<keyword id="KW-0067">ATP-binding</keyword>
<keyword id="KW-0963">Cytoplasm</keyword>
<keyword id="KW-0275">Fatty acid biosynthesis</keyword>
<keyword id="KW-0276">Fatty acid metabolism</keyword>
<keyword id="KW-0444">Lipid biosynthesis</keyword>
<keyword id="KW-0443">Lipid metabolism</keyword>
<keyword id="KW-0479">Metal-binding</keyword>
<keyword id="KW-0547">Nucleotide-binding</keyword>
<keyword id="KW-1185">Reference proteome</keyword>
<keyword id="KW-0808">Transferase</keyword>
<keyword id="KW-0862">Zinc</keyword>
<keyword id="KW-0863">Zinc-finger</keyword>
<name>ACCD_CHLAA</name>
<organism>
    <name type="scientific">Chloroflexus aurantiacus (strain ATCC 29366 / DSM 635 / J-10-fl)</name>
    <dbReference type="NCBI Taxonomy" id="324602"/>
    <lineage>
        <taxon>Bacteria</taxon>
        <taxon>Bacillati</taxon>
        <taxon>Chloroflexota</taxon>
        <taxon>Chloroflexia</taxon>
        <taxon>Chloroflexales</taxon>
        <taxon>Chloroflexineae</taxon>
        <taxon>Chloroflexaceae</taxon>
        <taxon>Chloroflexus</taxon>
    </lineage>
</organism>
<evidence type="ECO:0000255" key="1">
    <source>
        <dbReference type="HAMAP-Rule" id="MF_01395"/>
    </source>
</evidence>
<evidence type="ECO:0000255" key="2">
    <source>
        <dbReference type="PROSITE-ProRule" id="PRU01136"/>
    </source>
</evidence>
<gene>
    <name evidence="1" type="primary">accD</name>
    <name type="ordered locus">Caur_1648</name>
</gene>
<feature type="chain" id="PRO_0000389720" description="Acetyl-coenzyme A carboxylase carboxyl transferase subunit beta">
    <location>
        <begin position="1"/>
        <end position="305"/>
    </location>
</feature>
<feature type="domain" description="CoA carboxyltransferase N-terminal" evidence="2">
    <location>
        <begin position="27"/>
        <end position="296"/>
    </location>
</feature>
<feature type="zinc finger region" description="C4-type" evidence="1">
    <location>
        <begin position="31"/>
        <end position="53"/>
    </location>
</feature>
<feature type="binding site" evidence="1">
    <location>
        <position position="31"/>
    </location>
    <ligand>
        <name>Zn(2+)</name>
        <dbReference type="ChEBI" id="CHEBI:29105"/>
    </ligand>
</feature>
<feature type="binding site" evidence="1">
    <location>
        <position position="34"/>
    </location>
    <ligand>
        <name>Zn(2+)</name>
        <dbReference type="ChEBI" id="CHEBI:29105"/>
    </ligand>
</feature>
<feature type="binding site" evidence="1">
    <location>
        <position position="50"/>
    </location>
    <ligand>
        <name>Zn(2+)</name>
        <dbReference type="ChEBI" id="CHEBI:29105"/>
    </ligand>
</feature>
<feature type="binding site" evidence="1">
    <location>
        <position position="53"/>
    </location>
    <ligand>
        <name>Zn(2+)</name>
        <dbReference type="ChEBI" id="CHEBI:29105"/>
    </ligand>
</feature>
<comment type="function">
    <text evidence="1">Component of the acetyl coenzyme A carboxylase (ACC) complex. Biotin carboxylase (BC) catalyzes the carboxylation of biotin on its carrier protein (BCCP) and then the CO(2) group is transferred by the transcarboxylase to acetyl-CoA to form malonyl-CoA.</text>
</comment>
<comment type="catalytic activity">
    <reaction evidence="1">
        <text>N(6)-carboxybiotinyl-L-lysyl-[protein] + acetyl-CoA = N(6)-biotinyl-L-lysyl-[protein] + malonyl-CoA</text>
        <dbReference type="Rhea" id="RHEA:54728"/>
        <dbReference type="Rhea" id="RHEA-COMP:10505"/>
        <dbReference type="Rhea" id="RHEA-COMP:10506"/>
        <dbReference type="ChEBI" id="CHEBI:57288"/>
        <dbReference type="ChEBI" id="CHEBI:57384"/>
        <dbReference type="ChEBI" id="CHEBI:83144"/>
        <dbReference type="ChEBI" id="CHEBI:83145"/>
        <dbReference type="EC" id="2.1.3.15"/>
    </reaction>
</comment>
<comment type="cofactor">
    <cofactor evidence="1">
        <name>Zn(2+)</name>
        <dbReference type="ChEBI" id="CHEBI:29105"/>
    </cofactor>
    <text evidence="1">Binds 1 zinc ion per subunit.</text>
</comment>
<comment type="pathway">
    <text evidence="1">Lipid metabolism; malonyl-CoA biosynthesis; malonyl-CoA from acetyl-CoA: step 1/1.</text>
</comment>
<comment type="subunit">
    <text evidence="1">Acetyl-CoA carboxylase is a heterohexamer composed of biotin carboxyl carrier protein (AccB), biotin carboxylase (AccC) and two subunits each of ACCase subunit alpha (AccA) and ACCase subunit beta (AccD).</text>
</comment>
<comment type="subcellular location">
    <subcellularLocation>
        <location evidence="1">Cytoplasm</location>
    </subcellularLocation>
</comment>
<comment type="similarity">
    <text evidence="1">Belongs to the AccD/PCCB family.</text>
</comment>
<accession>A9WBQ9</accession>
<dbReference type="EC" id="2.1.3.15" evidence="1"/>
<dbReference type="EMBL" id="CP000909">
    <property type="protein sequence ID" value="ABY34866.1"/>
    <property type="molecule type" value="Genomic_DNA"/>
</dbReference>
<dbReference type="RefSeq" id="WP_012257520.1">
    <property type="nucleotide sequence ID" value="NC_010175.1"/>
</dbReference>
<dbReference type="RefSeq" id="YP_001635255.1">
    <property type="nucleotide sequence ID" value="NC_010175.1"/>
</dbReference>
<dbReference type="SMR" id="A9WBQ9"/>
<dbReference type="FunCoup" id="A9WBQ9">
    <property type="interactions" value="243"/>
</dbReference>
<dbReference type="STRING" id="324602.Caur_1648"/>
<dbReference type="EnsemblBacteria" id="ABY34866">
    <property type="protein sequence ID" value="ABY34866"/>
    <property type="gene ID" value="Caur_1648"/>
</dbReference>
<dbReference type="KEGG" id="cau:Caur_1648"/>
<dbReference type="PATRIC" id="fig|324602.8.peg.1884"/>
<dbReference type="eggNOG" id="COG0777">
    <property type="taxonomic scope" value="Bacteria"/>
</dbReference>
<dbReference type="HOGENOM" id="CLU_015486_1_1_0"/>
<dbReference type="InParanoid" id="A9WBQ9"/>
<dbReference type="BioCyc" id="MetaCyc:MONOMER-17287"/>
<dbReference type="UniPathway" id="UPA00655">
    <property type="reaction ID" value="UER00711"/>
</dbReference>
<dbReference type="Proteomes" id="UP000002008">
    <property type="component" value="Chromosome"/>
</dbReference>
<dbReference type="GO" id="GO:0009317">
    <property type="term" value="C:acetyl-CoA carboxylase complex"/>
    <property type="evidence" value="ECO:0007669"/>
    <property type="project" value="InterPro"/>
</dbReference>
<dbReference type="GO" id="GO:0003989">
    <property type="term" value="F:acetyl-CoA carboxylase activity"/>
    <property type="evidence" value="ECO:0007669"/>
    <property type="project" value="InterPro"/>
</dbReference>
<dbReference type="GO" id="GO:0005524">
    <property type="term" value="F:ATP binding"/>
    <property type="evidence" value="ECO:0007669"/>
    <property type="project" value="UniProtKB-KW"/>
</dbReference>
<dbReference type="GO" id="GO:0016743">
    <property type="term" value="F:carboxyl- or carbamoyltransferase activity"/>
    <property type="evidence" value="ECO:0007669"/>
    <property type="project" value="UniProtKB-UniRule"/>
</dbReference>
<dbReference type="GO" id="GO:0008270">
    <property type="term" value="F:zinc ion binding"/>
    <property type="evidence" value="ECO:0007669"/>
    <property type="project" value="UniProtKB-UniRule"/>
</dbReference>
<dbReference type="GO" id="GO:2001295">
    <property type="term" value="P:malonyl-CoA biosynthetic process"/>
    <property type="evidence" value="ECO:0007669"/>
    <property type="project" value="UniProtKB-UniRule"/>
</dbReference>
<dbReference type="GO" id="GO:0071768">
    <property type="term" value="P:mycolic acid biosynthetic process"/>
    <property type="evidence" value="ECO:0000318"/>
    <property type="project" value="GO_Central"/>
</dbReference>
<dbReference type="Gene3D" id="3.90.226.10">
    <property type="entry name" value="2-enoyl-CoA Hydratase, Chain A, domain 1"/>
    <property type="match status" value="1"/>
</dbReference>
<dbReference type="HAMAP" id="MF_01395">
    <property type="entry name" value="AcetylCoA_CT_beta"/>
    <property type="match status" value="1"/>
</dbReference>
<dbReference type="InterPro" id="IPR034733">
    <property type="entry name" value="AcCoA_carboxyl_beta"/>
</dbReference>
<dbReference type="InterPro" id="IPR000438">
    <property type="entry name" value="Acetyl_CoA_COase_Trfase_b_su"/>
</dbReference>
<dbReference type="InterPro" id="IPR029045">
    <property type="entry name" value="ClpP/crotonase-like_dom_sf"/>
</dbReference>
<dbReference type="InterPro" id="IPR011762">
    <property type="entry name" value="COA_CT_N"/>
</dbReference>
<dbReference type="InterPro" id="IPR041010">
    <property type="entry name" value="Znf-ACC"/>
</dbReference>
<dbReference type="NCBIfam" id="TIGR00515">
    <property type="entry name" value="accD"/>
    <property type="match status" value="1"/>
</dbReference>
<dbReference type="PANTHER" id="PTHR42995">
    <property type="entry name" value="ACETYL-COENZYME A CARBOXYLASE CARBOXYL TRANSFERASE SUBUNIT BETA, CHLOROPLASTIC"/>
    <property type="match status" value="1"/>
</dbReference>
<dbReference type="PANTHER" id="PTHR42995:SF5">
    <property type="entry name" value="ACETYL-COENZYME A CARBOXYLASE CARBOXYL TRANSFERASE SUBUNIT BETA, CHLOROPLASTIC"/>
    <property type="match status" value="1"/>
</dbReference>
<dbReference type="Pfam" id="PF01039">
    <property type="entry name" value="Carboxyl_trans"/>
    <property type="match status" value="1"/>
</dbReference>
<dbReference type="Pfam" id="PF17848">
    <property type="entry name" value="Zn_ribbon_ACC"/>
    <property type="match status" value="1"/>
</dbReference>
<dbReference type="PRINTS" id="PR01070">
    <property type="entry name" value="ACCCTRFRASEB"/>
</dbReference>
<dbReference type="SUPFAM" id="SSF52096">
    <property type="entry name" value="ClpP/crotonase"/>
    <property type="match status" value="1"/>
</dbReference>
<dbReference type="PROSITE" id="PS50980">
    <property type="entry name" value="COA_CT_NTER"/>
    <property type="match status" value="1"/>
</dbReference>
<protein>
    <recommendedName>
        <fullName evidence="1">Acetyl-coenzyme A carboxylase carboxyl transferase subunit beta</fullName>
        <shortName evidence="1">ACCase subunit beta</shortName>
        <shortName evidence="1">Acetyl-CoA carboxylase carboxyltransferase subunit beta</shortName>
        <ecNumber evidence="1">2.1.3.15</ecNumber>
    </recommendedName>
</protein>
<sequence>MKEFFRLSRKGFTGREDQDSAQIPDDLWVKCSSCRELIYKKQLNDNLKVCPKCGHHMRLSAHEWLGLLDVGSFREMDANLLPTDPLGFVTDEESYAAKLAKTQQRTGMADAVIAGIGAISNMQICVAVADFSFMGASMGSVYGEKMARSAERAAELGVPLLTINTSGGARQQEGVIGLMQMAKVTMALTRLADAGQPHIALLVDPCYGGVTASYPSVADIIIAEPGANIGFAGKRLIEQIMRQKLPAGFQTAEFMLEHGMIDMVVPRSEMRDTLARILRLYRQRSTSPAKAELAGRRATLPQPIM</sequence>
<proteinExistence type="inferred from homology"/>
<reference key="1">
    <citation type="journal article" date="2011" name="BMC Genomics">
        <title>Complete genome sequence of the filamentous anoxygenic phototrophic bacterium Chloroflexus aurantiacus.</title>
        <authorList>
            <person name="Tang K.H."/>
            <person name="Barry K."/>
            <person name="Chertkov O."/>
            <person name="Dalin E."/>
            <person name="Han C.S."/>
            <person name="Hauser L.J."/>
            <person name="Honchak B.M."/>
            <person name="Karbach L.E."/>
            <person name="Land M.L."/>
            <person name="Lapidus A."/>
            <person name="Larimer F.W."/>
            <person name="Mikhailova N."/>
            <person name="Pitluck S."/>
            <person name="Pierson B.K."/>
            <person name="Blankenship R.E."/>
        </authorList>
    </citation>
    <scope>NUCLEOTIDE SEQUENCE [LARGE SCALE GENOMIC DNA]</scope>
    <source>
        <strain>ATCC 29366 / DSM 635 / J-10-fl</strain>
    </source>
</reference>